<accession>Q1RAY1</accession>
<gene>
    <name evidence="1" type="primary">yoaH</name>
    <name type="ordered locus">UTI89_C2007</name>
</gene>
<evidence type="ECO:0000255" key="1">
    <source>
        <dbReference type="HAMAP-Rule" id="MF_00507"/>
    </source>
</evidence>
<feature type="chain" id="PRO_0000258532" description="UPF0181 protein YoaH">
    <location>
        <begin position="1"/>
        <end position="59"/>
    </location>
</feature>
<name>YOAH_ECOUT</name>
<proteinExistence type="inferred from homology"/>
<reference key="1">
    <citation type="journal article" date="2006" name="Proc. Natl. Acad. Sci. U.S.A.">
        <title>Identification of genes subject to positive selection in uropathogenic strains of Escherichia coli: a comparative genomics approach.</title>
        <authorList>
            <person name="Chen S.L."/>
            <person name="Hung C.-S."/>
            <person name="Xu J."/>
            <person name="Reigstad C.S."/>
            <person name="Magrini V."/>
            <person name="Sabo A."/>
            <person name="Blasiar D."/>
            <person name="Bieri T."/>
            <person name="Meyer R.R."/>
            <person name="Ozersky P."/>
            <person name="Armstrong J.R."/>
            <person name="Fulton R.S."/>
            <person name="Latreille J.P."/>
            <person name="Spieth J."/>
            <person name="Hooton T.M."/>
            <person name="Mardis E.R."/>
            <person name="Hultgren S.J."/>
            <person name="Gordon J.I."/>
        </authorList>
    </citation>
    <scope>NUCLEOTIDE SEQUENCE [LARGE SCALE GENOMIC DNA]</scope>
    <source>
        <strain>UTI89 / UPEC</strain>
    </source>
</reference>
<protein>
    <recommendedName>
        <fullName evidence="1">UPF0181 protein YoaH</fullName>
    </recommendedName>
</protein>
<sequence length="59" mass="6554">MFAGLPSLTHEQQQKAVERIQELMAQGMSSGQAIALVAEELRANHSGERIVARFEDEDE</sequence>
<comment type="similarity">
    <text evidence="1">Belongs to the UPF0181 family.</text>
</comment>
<dbReference type="EMBL" id="CP000243">
    <property type="protein sequence ID" value="ABE07483.1"/>
    <property type="molecule type" value="Genomic_DNA"/>
</dbReference>
<dbReference type="RefSeq" id="WP_000457334.1">
    <property type="nucleotide sequence ID" value="NZ_CP064825.1"/>
</dbReference>
<dbReference type="SMR" id="Q1RAY1"/>
<dbReference type="KEGG" id="eci:UTI89_C2007"/>
<dbReference type="HOGENOM" id="CLU_185263_0_0_6"/>
<dbReference type="Proteomes" id="UP000001952">
    <property type="component" value="Chromosome"/>
</dbReference>
<dbReference type="HAMAP" id="MF_00507">
    <property type="entry name" value="UPF0181"/>
    <property type="match status" value="1"/>
</dbReference>
<dbReference type="InterPro" id="IPR005371">
    <property type="entry name" value="UPF0181"/>
</dbReference>
<dbReference type="NCBIfam" id="NF003476">
    <property type="entry name" value="PRK05114.1"/>
    <property type="match status" value="1"/>
</dbReference>
<dbReference type="Pfam" id="PF03701">
    <property type="entry name" value="UPF0181"/>
    <property type="match status" value="1"/>
</dbReference>
<organism>
    <name type="scientific">Escherichia coli (strain UTI89 / UPEC)</name>
    <dbReference type="NCBI Taxonomy" id="364106"/>
    <lineage>
        <taxon>Bacteria</taxon>
        <taxon>Pseudomonadati</taxon>
        <taxon>Pseudomonadota</taxon>
        <taxon>Gammaproteobacteria</taxon>
        <taxon>Enterobacterales</taxon>
        <taxon>Enterobacteriaceae</taxon>
        <taxon>Escherichia</taxon>
    </lineage>
</organism>